<sequence>MSVSRRDVLKFAAATPGVLGLGVVASSLRAAPASAGSLGTLLDYAAGVIPASQIRAAGAVGAIRYVSDRRPGGAWMLGKPIQLSEARDLSGNGLKIVSCYQYGKGSTADWLGGASAGVQHARRGSELHAAAGGPTSAPIYASIDDNPSYEQYKNQIVPYLRSWESVIGHQRTGVYANSKTIDWAVNDGLGSYFWQHNWGSPKGYTHPAAHLHQVEIDKRKVGGVGVDVNQILKPQFGQWA</sequence>
<dbReference type="EC" id="3.2.1.17" evidence="5"/>
<dbReference type="EMBL" id="AL123456">
    <property type="protein sequence ID" value="CCP45319.1"/>
    <property type="molecule type" value="Genomic_DNA"/>
</dbReference>
<dbReference type="RefSeq" id="NP_217041.1">
    <property type="nucleotide sequence ID" value="NC_000962.3"/>
</dbReference>
<dbReference type="RefSeq" id="WP_003412957.1">
    <property type="nucleotide sequence ID" value="NZ_NVQJ01000032.1"/>
</dbReference>
<dbReference type="PDB" id="4PMN">
    <property type="method" value="X-ray"/>
    <property type="resolution" value="1.44 A"/>
    <property type="chains" value="A/B=36-240"/>
</dbReference>
<dbReference type="PDB" id="4PMO">
    <property type="method" value="X-ray"/>
    <property type="resolution" value="1.33 A"/>
    <property type="chains" value="A/B=36-240"/>
</dbReference>
<dbReference type="PDB" id="4PMQ">
    <property type="method" value="X-ray"/>
    <property type="resolution" value="1.61 A"/>
    <property type="chains" value="A=36-240"/>
</dbReference>
<dbReference type="PDB" id="4PMR">
    <property type="method" value="X-ray"/>
    <property type="resolution" value="1.81 A"/>
    <property type="chains" value="A=36-240"/>
</dbReference>
<dbReference type="PDBsum" id="4PMN"/>
<dbReference type="PDBsum" id="4PMO"/>
<dbReference type="PDBsum" id="4PMQ"/>
<dbReference type="PDBsum" id="4PMR"/>
<dbReference type="SMR" id="I6XEI5"/>
<dbReference type="STRING" id="83332.Rv2525c"/>
<dbReference type="PaxDb" id="83332-Rv2525c"/>
<dbReference type="DNASU" id="888612"/>
<dbReference type="GeneID" id="888612"/>
<dbReference type="KEGG" id="mtu:Rv2525c"/>
<dbReference type="KEGG" id="mtv:RVBD_2525c"/>
<dbReference type="PATRIC" id="fig|83332.111.peg.2823"/>
<dbReference type="TubercuList" id="Rv2525c"/>
<dbReference type="eggNOG" id="COG3757">
    <property type="taxonomic scope" value="Bacteria"/>
</dbReference>
<dbReference type="HOGENOM" id="CLU_075024_1_0_11"/>
<dbReference type="InParanoid" id="I6XEI5"/>
<dbReference type="OrthoDB" id="4472230at2"/>
<dbReference type="UniPathway" id="UPA00549"/>
<dbReference type="Proteomes" id="UP000001584">
    <property type="component" value="Chromosome"/>
</dbReference>
<dbReference type="GO" id="GO:0005576">
    <property type="term" value="C:extracellular region"/>
    <property type="evidence" value="ECO:0007669"/>
    <property type="project" value="UniProtKB-SubCell"/>
</dbReference>
<dbReference type="GO" id="GO:0003796">
    <property type="term" value="F:lysozyme activity"/>
    <property type="evidence" value="ECO:0007669"/>
    <property type="project" value="UniProtKB-EC"/>
</dbReference>
<dbReference type="GO" id="GO:0016998">
    <property type="term" value="P:cell wall macromolecule catabolic process"/>
    <property type="evidence" value="ECO:0007669"/>
    <property type="project" value="UniProtKB-UniPathway"/>
</dbReference>
<dbReference type="GO" id="GO:0071555">
    <property type="term" value="P:cell wall organization"/>
    <property type="evidence" value="ECO:0007669"/>
    <property type="project" value="UniProtKB-KW"/>
</dbReference>
<dbReference type="FunFam" id="3.20.20.80:FF:000194">
    <property type="entry name" value="Conserved exported protein of uncharacterized function"/>
    <property type="match status" value="1"/>
</dbReference>
<dbReference type="Gene3D" id="3.20.20.80">
    <property type="entry name" value="Glycosidases"/>
    <property type="match status" value="1"/>
</dbReference>
<dbReference type="InterPro" id="IPR017853">
    <property type="entry name" value="Glycoside_hydrolase_SF"/>
</dbReference>
<dbReference type="InterPro" id="IPR015020">
    <property type="entry name" value="Rv2525c-like_Glyco_Hydro-like"/>
</dbReference>
<dbReference type="InterPro" id="IPR006311">
    <property type="entry name" value="TAT_signal"/>
</dbReference>
<dbReference type="InterPro" id="IPR019546">
    <property type="entry name" value="TAT_signal_bac_arc"/>
</dbReference>
<dbReference type="NCBIfam" id="TIGR01409">
    <property type="entry name" value="TAT_signal_seq"/>
    <property type="match status" value="1"/>
</dbReference>
<dbReference type="Pfam" id="PF08924">
    <property type="entry name" value="Rv2525c_GlyHyd-like"/>
    <property type="match status" value="1"/>
</dbReference>
<dbReference type="SUPFAM" id="SSF51445">
    <property type="entry name" value="(Trans)glycosidases"/>
    <property type="match status" value="1"/>
</dbReference>
<dbReference type="PROSITE" id="PS51318">
    <property type="entry name" value="TAT"/>
    <property type="match status" value="1"/>
</dbReference>
<comment type="function">
    <text evidence="3 7">May function as a peptidoglycan hydrolase with glycosidase activity (PubMed:25260828). In vitro, displays esterase activity toward p-nitrophenyl esters of various acyl chain length (C4 to C16), with a preference for p-nitrophenyl butyrate (C4) (PubMed:25869294).</text>
</comment>
<comment type="catalytic activity">
    <reaction evidence="7">
        <text>Hydrolysis of (1-&gt;4)-beta-linkages between N-acetylmuramic acid and N-acetyl-D-glucosamine residues in a peptidoglycan and between N-acetyl-D-glucosamine residues in chitodextrins.</text>
        <dbReference type="EC" id="3.2.1.17"/>
    </reaction>
</comment>
<comment type="biophysicochemical properties">
    <phDependence>
        <text evidence="3">Optimum pH is 8.0 for the hydrolysis of p-nitrophenyl butyrate.</text>
    </phDependence>
    <temperatureDependence>
        <text evidence="3">Optimum temperature is 38 degrees Celsius for the hydrolysis of p-nitrophenyl butyrate.</text>
    </temperatureDependence>
</comment>
<comment type="pathway">
    <text evidence="7">Cell wall degradation; peptidoglycan degradation.</text>
</comment>
<comment type="subcellular location">
    <subcellularLocation>
        <location evidence="2">Secreted</location>
    </subcellularLocation>
</comment>
<comment type="induction">
    <text evidence="2">Upon exposure to antituberculous drugs such as isoniazid, ethionamide or PA-824, Rv2525c expression is significantly up-regulated together with those of other genes involved in cell wall processes.</text>
</comment>
<comment type="PTM">
    <text evidence="1 6">Predicted to be exported by the Tat system. The position of the signal peptide cleavage has not been experimentally proven.</text>
</comment>
<comment type="disruption phenotype">
    <text evidence="2">Cells lacking this gene display an increase in susceptibility to some beta-lactam antibiotics and, despite slower growth in vitro, enhanced virulence in both cellular and murine models of tuberculosis. No detectable difference in the lipid profiles.</text>
</comment>
<accession>I6XEI5</accession>
<gene>
    <name evidence="8" type="ordered locus">Rv2525c</name>
</gene>
<evidence type="ECO:0000255" key="1">
    <source>
        <dbReference type="PROSITE-ProRule" id="PRU00648"/>
    </source>
</evidence>
<evidence type="ECO:0000269" key="2">
    <source>
    </source>
</evidence>
<evidence type="ECO:0000269" key="3">
    <source>
    </source>
</evidence>
<evidence type="ECO:0000303" key="4">
    <source>
    </source>
</evidence>
<evidence type="ECO:0000305" key="5"/>
<evidence type="ECO:0000305" key="6">
    <source>
    </source>
</evidence>
<evidence type="ECO:0000305" key="7">
    <source>
    </source>
</evidence>
<evidence type="ECO:0000312" key="8">
    <source>
        <dbReference type="EMBL" id="CCP45319.1"/>
    </source>
</evidence>
<proteinExistence type="evidence at protein level"/>
<name>LYS25_MYCTU</name>
<protein>
    <recommendedName>
        <fullName evidence="4">Putative peptidoglycan hydrolase Rv2525c</fullName>
        <ecNumber evidence="5">3.2.1.17</ecNumber>
    </recommendedName>
</protein>
<organism>
    <name type="scientific">Mycobacterium tuberculosis (strain ATCC 25618 / H37Rv)</name>
    <dbReference type="NCBI Taxonomy" id="83332"/>
    <lineage>
        <taxon>Bacteria</taxon>
        <taxon>Bacillati</taxon>
        <taxon>Actinomycetota</taxon>
        <taxon>Actinomycetes</taxon>
        <taxon>Mycobacteriales</taxon>
        <taxon>Mycobacteriaceae</taxon>
        <taxon>Mycobacterium</taxon>
        <taxon>Mycobacterium tuberculosis complex</taxon>
    </lineage>
</organism>
<feature type="signal peptide" description="Tat-type signal" evidence="1">
    <location>
        <begin position="1"/>
        <end position="33"/>
    </location>
</feature>
<feature type="chain" id="PRO_5003706761" description="Putative peptidoglycan hydrolase Rv2525c">
    <location>
        <begin position="34"/>
        <end position="240"/>
    </location>
</feature>
<feature type="mutagenesis site" description="Complete loss of esterase activity." evidence="3">
    <original>G</original>
    <variation>A</variation>
    <location>
        <position position="113"/>
    </location>
</feature>
<feature type="mutagenesis site" description="83% loss of esterase activity." evidence="3">
    <original>S</original>
    <variation>A</variation>
    <location>
        <position position="115"/>
    </location>
</feature>
<feature type="mutagenesis site" description="83% loss of esterase activity." evidence="3">
    <original>G</original>
    <variation>A</variation>
    <location>
        <position position="117"/>
    </location>
</feature>
<keyword id="KW-0002">3D-structure</keyword>
<keyword id="KW-0961">Cell wall biogenesis/degradation</keyword>
<keyword id="KW-0326">Glycosidase</keyword>
<keyword id="KW-0378">Hydrolase</keyword>
<keyword id="KW-1185">Reference proteome</keyword>
<keyword id="KW-0964">Secreted</keyword>
<keyword id="KW-0732">Signal</keyword>
<reference key="1">
    <citation type="journal article" date="1998" name="Nature">
        <title>Deciphering the biology of Mycobacterium tuberculosis from the complete genome sequence.</title>
        <authorList>
            <person name="Cole S.T."/>
            <person name="Brosch R."/>
            <person name="Parkhill J."/>
            <person name="Garnier T."/>
            <person name="Churcher C.M."/>
            <person name="Harris D.E."/>
            <person name="Gordon S.V."/>
            <person name="Eiglmeier K."/>
            <person name="Gas S."/>
            <person name="Barry C.E. III"/>
            <person name="Tekaia F."/>
            <person name="Badcock K."/>
            <person name="Basham D."/>
            <person name="Brown D."/>
            <person name="Chillingworth T."/>
            <person name="Connor R."/>
            <person name="Davies R.M."/>
            <person name="Devlin K."/>
            <person name="Feltwell T."/>
            <person name="Gentles S."/>
            <person name="Hamlin N."/>
            <person name="Holroyd S."/>
            <person name="Hornsby T."/>
            <person name="Jagels K."/>
            <person name="Krogh A."/>
            <person name="McLean J."/>
            <person name="Moule S."/>
            <person name="Murphy L.D."/>
            <person name="Oliver S."/>
            <person name="Osborne J."/>
            <person name="Quail M.A."/>
            <person name="Rajandream M.A."/>
            <person name="Rogers J."/>
            <person name="Rutter S."/>
            <person name="Seeger K."/>
            <person name="Skelton S."/>
            <person name="Squares S."/>
            <person name="Squares R."/>
            <person name="Sulston J.E."/>
            <person name="Taylor K."/>
            <person name="Whitehead S."/>
            <person name="Barrell B.G."/>
        </authorList>
    </citation>
    <scope>NUCLEOTIDE SEQUENCE [LARGE SCALE GENOMIC DNA]</scope>
    <source>
        <strain>ATCC 25618 / H37Rv</strain>
    </source>
</reference>
<reference key="2">
    <citation type="submission" date="2012-12" db="EMBL/GenBank/DDBJ databases">
        <authorList>
            <person name="Lew J.M."/>
        </authorList>
    </citation>
    <scope>IDENTIFICATION</scope>
    <scope>GENOME REANNOTATION</scope>
    <source>
        <strain>ATCC 25618 / H37Rv</strain>
    </source>
</reference>
<reference key="3">
    <citation type="journal article" date="2006" name="J. Bacteriol.">
        <title>Inactivation of Rv2525c, a substrate of the twin arginine translocation (Tat) system of Mycobacterium tuberculosis, increases beta-lactam susceptibility and virulence.</title>
        <authorList>
            <person name="Saint-Joanis B."/>
            <person name="Demangel C."/>
            <person name="Jackson M."/>
            <person name="Brodin P."/>
            <person name="Marsollier L."/>
            <person name="Boshoff H."/>
            <person name="Cole S.T."/>
        </authorList>
    </citation>
    <scope>SUBCELLULAR LOCATION</scope>
    <scope>DISRUPTION PHENOTYPE</scope>
    <scope>INDUCTION</scope>
    <source>
        <strain>H37Rv</strain>
    </source>
</reference>
<reference key="4">
    <citation type="journal article" date="2011" name="Mol. Cell. Proteomics">
        <title>Proteogenomic analysis of Mycobacterium tuberculosis by high resolution mass spectrometry.</title>
        <authorList>
            <person name="Kelkar D.S."/>
            <person name="Kumar D."/>
            <person name="Kumar P."/>
            <person name="Balakrishnan L."/>
            <person name="Muthusamy B."/>
            <person name="Yadav A.K."/>
            <person name="Shrivastava P."/>
            <person name="Marimuthu A."/>
            <person name="Anand S."/>
            <person name="Sundaram H."/>
            <person name="Kingsbury R."/>
            <person name="Harsha H.C."/>
            <person name="Nair B."/>
            <person name="Prasad T.S."/>
            <person name="Chauhan D.S."/>
            <person name="Katoch K."/>
            <person name="Katoch V.M."/>
            <person name="Kumar P."/>
            <person name="Chaerkady R."/>
            <person name="Ramachandran S."/>
            <person name="Dash D."/>
            <person name="Pandey A."/>
        </authorList>
    </citation>
    <scope>IDENTIFICATION BY MASS SPECTROMETRY [LARGE SCALE ANALYSIS]</scope>
    <source>
        <strain>ATCC 25618 / H37Rv</strain>
    </source>
</reference>
<reference key="5">
    <citation type="journal article" date="2015" name="Appl. Biochem. Biotechnol.">
        <title>Expression, purification and characterisation of secreted esterase Rv2525c from Mycobacterium tuberculosis.</title>
        <authorList>
            <person name="Dang G."/>
            <person name="Chen L."/>
            <person name="Li Z."/>
            <person name="Deng X."/>
            <person name="Cui Y."/>
            <person name="Cao J."/>
            <person name="Yu S."/>
            <person name="Pang H."/>
            <person name="Liu S."/>
        </authorList>
    </citation>
    <scope>FUNCTION AS AN ESTERASE</scope>
    <scope>SUBSTRATE SPECIFICITY</scope>
    <scope>BIOPHYSICOCHEMICAL PROPERTIES</scope>
    <scope>MUTAGENESIS OF GLY-113; SER-115 AND GLY-117</scope>
    <source>
        <strain>H37Rv</strain>
    </source>
</reference>
<reference key="6">
    <citation type="journal article" date="2014" name="J. Struct. Biol.">
        <title>Structural studies suggest a peptidoglycan hydrolase function for the Mycobacterium tuberculosis Tat-secreted protein Rv2525c.</title>
        <authorList>
            <person name="Bellinzoni M."/>
            <person name="Haouz A."/>
            <person name="Miras I."/>
            <person name="Magnet S."/>
            <person name="Andre-Leroux G."/>
            <person name="Mukherjee R."/>
            <person name="Shepard W."/>
            <person name="Cole S.T."/>
            <person name="Alzari P.M."/>
        </authorList>
    </citation>
    <scope>X-RAY CRYSTALLOGRAPHY (1.33 ANGSTROMS) OF 36-240</scope>
    <scope>FUNCTION</scope>
    <source>
        <strain>H37Rv</strain>
    </source>
</reference>